<keyword id="KW-0963">Cytoplasm</keyword>
<keyword id="KW-0342">GTP-binding</keyword>
<keyword id="KW-0436">Ligase</keyword>
<keyword id="KW-0460">Magnesium</keyword>
<keyword id="KW-0479">Metal-binding</keyword>
<keyword id="KW-0547">Nucleotide-binding</keyword>
<keyword id="KW-0658">Purine biosynthesis</keyword>
<feature type="chain" id="PRO_1000089299" description="Adenylosuccinate synthetase">
    <location>
        <begin position="1"/>
        <end position="440"/>
    </location>
</feature>
<feature type="active site" description="Proton acceptor" evidence="1">
    <location>
        <position position="12"/>
    </location>
</feature>
<feature type="active site" description="Proton donor" evidence="1">
    <location>
        <position position="40"/>
    </location>
</feature>
<feature type="binding site" evidence="1">
    <location>
        <begin position="11"/>
        <end position="17"/>
    </location>
    <ligand>
        <name>GTP</name>
        <dbReference type="ChEBI" id="CHEBI:37565"/>
    </ligand>
</feature>
<feature type="binding site" description="in other chain" evidence="1">
    <location>
        <begin position="12"/>
        <end position="15"/>
    </location>
    <ligand>
        <name>IMP</name>
        <dbReference type="ChEBI" id="CHEBI:58053"/>
        <note>ligand shared between dimeric partners</note>
    </ligand>
</feature>
<feature type="binding site" evidence="1">
    <location>
        <position position="12"/>
    </location>
    <ligand>
        <name>Mg(2+)</name>
        <dbReference type="ChEBI" id="CHEBI:18420"/>
    </ligand>
</feature>
<feature type="binding site" description="in other chain" evidence="1">
    <location>
        <begin position="37"/>
        <end position="40"/>
    </location>
    <ligand>
        <name>IMP</name>
        <dbReference type="ChEBI" id="CHEBI:58053"/>
        <note>ligand shared between dimeric partners</note>
    </ligand>
</feature>
<feature type="binding site" evidence="1">
    <location>
        <begin position="39"/>
        <end position="41"/>
    </location>
    <ligand>
        <name>GTP</name>
        <dbReference type="ChEBI" id="CHEBI:37565"/>
    </ligand>
</feature>
<feature type="binding site" evidence="1">
    <location>
        <position position="39"/>
    </location>
    <ligand>
        <name>Mg(2+)</name>
        <dbReference type="ChEBI" id="CHEBI:18420"/>
    </ligand>
</feature>
<feature type="binding site" description="in other chain" evidence="1">
    <location>
        <position position="127"/>
    </location>
    <ligand>
        <name>IMP</name>
        <dbReference type="ChEBI" id="CHEBI:58053"/>
        <note>ligand shared between dimeric partners</note>
    </ligand>
</feature>
<feature type="binding site" evidence="1">
    <location>
        <position position="141"/>
    </location>
    <ligand>
        <name>IMP</name>
        <dbReference type="ChEBI" id="CHEBI:58053"/>
        <note>ligand shared between dimeric partners</note>
    </ligand>
</feature>
<feature type="binding site" description="in other chain" evidence="1">
    <location>
        <position position="230"/>
    </location>
    <ligand>
        <name>IMP</name>
        <dbReference type="ChEBI" id="CHEBI:58053"/>
        <note>ligand shared between dimeric partners</note>
    </ligand>
</feature>
<feature type="binding site" description="in other chain" evidence="1">
    <location>
        <position position="245"/>
    </location>
    <ligand>
        <name>IMP</name>
        <dbReference type="ChEBI" id="CHEBI:58053"/>
        <note>ligand shared between dimeric partners</note>
    </ligand>
</feature>
<feature type="binding site" evidence="1">
    <location>
        <begin position="307"/>
        <end position="313"/>
    </location>
    <ligand>
        <name>substrate</name>
    </ligand>
</feature>
<feature type="binding site" description="in other chain" evidence="1">
    <location>
        <position position="311"/>
    </location>
    <ligand>
        <name>IMP</name>
        <dbReference type="ChEBI" id="CHEBI:58053"/>
        <note>ligand shared between dimeric partners</note>
    </ligand>
</feature>
<feature type="binding site" evidence="1">
    <location>
        <position position="313"/>
    </location>
    <ligand>
        <name>GTP</name>
        <dbReference type="ChEBI" id="CHEBI:37565"/>
    </ligand>
</feature>
<feature type="binding site" evidence="1">
    <location>
        <begin position="339"/>
        <end position="341"/>
    </location>
    <ligand>
        <name>GTP</name>
        <dbReference type="ChEBI" id="CHEBI:37565"/>
    </ligand>
</feature>
<feature type="binding site" evidence="1">
    <location>
        <begin position="424"/>
        <end position="426"/>
    </location>
    <ligand>
        <name>GTP</name>
        <dbReference type="ChEBI" id="CHEBI:37565"/>
    </ligand>
</feature>
<organism>
    <name type="scientific">Halobacterium salinarum (strain ATCC 29341 / DSM 671 / R1)</name>
    <dbReference type="NCBI Taxonomy" id="478009"/>
    <lineage>
        <taxon>Archaea</taxon>
        <taxon>Methanobacteriati</taxon>
        <taxon>Methanobacteriota</taxon>
        <taxon>Stenosarchaea group</taxon>
        <taxon>Halobacteria</taxon>
        <taxon>Halobacteriales</taxon>
        <taxon>Halobacteriaceae</taxon>
        <taxon>Halobacterium</taxon>
        <taxon>Halobacterium salinarum NRC-34001</taxon>
    </lineage>
</organism>
<reference key="1">
    <citation type="journal article" date="2008" name="Genomics">
        <title>Evolution in the laboratory: the genome of Halobacterium salinarum strain R1 compared to that of strain NRC-1.</title>
        <authorList>
            <person name="Pfeiffer F."/>
            <person name="Schuster S.C."/>
            <person name="Broicher A."/>
            <person name="Falb M."/>
            <person name="Palm P."/>
            <person name="Rodewald K."/>
            <person name="Ruepp A."/>
            <person name="Soppa J."/>
            <person name="Tittor J."/>
            <person name="Oesterhelt D."/>
        </authorList>
    </citation>
    <scope>NUCLEOTIDE SEQUENCE [LARGE SCALE GENOMIC DNA]</scope>
    <source>
        <strain>ATCC 29341 / DSM 671 / R1</strain>
    </source>
</reference>
<accession>B0R4U8</accession>
<comment type="function">
    <text evidence="1">Plays an important role in the de novo pathway of purine nucleotide biosynthesis. Catalyzes the first committed step in the biosynthesis of AMP from IMP.</text>
</comment>
<comment type="catalytic activity">
    <reaction evidence="1">
        <text>IMP + L-aspartate + GTP = N(6)-(1,2-dicarboxyethyl)-AMP + GDP + phosphate + 2 H(+)</text>
        <dbReference type="Rhea" id="RHEA:15753"/>
        <dbReference type="ChEBI" id="CHEBI:15378"/>
        <dbReference type="ChEBI" id="CHEBI:29991"/>
        <dbReference type="ChEBI" id="CHEBI:37565"/>
        <dbReference type="ChEBI" id="CHEBI:43474"/>
        <dbReference type="ChEBI" id="CHEBI:57567"/>
        <dbReference type="ChEBI" id="CHEBI:58053"/>
        <dbReference type="ChEBI" id="CHEBI:58189"/>
        <dbReference type="EC" id="6.3.4.4"/>
    </reaction>
</comment>
<comment type="cofactor">
    <cofactor evidence="1">
        <name>Mg(2+)</name>
        <dbReference type="ChEBI" id="CHEBI:18420"/>
    </cofactor>
    <text evidence="1">Binds 1 Mg(2+) ion per subunit.</text>
</comment>
<comment type="pathway">
    <text evidence="1">Purine metabolism; AMP biosynthesis via de novo pathway; AMP from IMP: step 1/2.</text>
</comment>
<comment type="subunit">
    <text evidence="1">Homodimer.</text>
</comment>
<comment type="subcellular location">
    <subcellularLocation>
        <location evidence="1">Cytoplasm</location>
    </subcellularLocation>
</comment>
<comment type="similarity">
    <text evidence="1">Belongs to the adenylosuccinate synthetase family.</text>
</comment>
<protein>
    <recommendedName>
        <fullName evidence="1">Adenylosuccinate synthetase</fullName>
        <shortName evidence="1">AMPSase</shortName>
        <shortName evidence="1">AdSS</shortName>
        <ecNumber evidence="1">6.3.4.4</ecNumber>
    </recommendedName>
    <alternativeName>
        <fullName evidence="1">IMP--aspartate ligase</fullName>
    </alternativeName>
</protein>
<proteinExistence type="inferred from homology"/>
<sequence>MTVTIVGAQLGDEGKGGVVDLFGDATDVVVRYQGGDNAGHTVVAGGEEYKLSLVPSGVVRGKTGVLGNGCVINPETLFEEVDALRERGLDPDVRLAKRAHVILPFHRELDGAEEAAKADSDSEIGTTGRGIGPTYEDKIGRRGVRVGDLLNEDALRDRLEYLVDAKRAIYEDVYGFDASETDGAFDIDAIHEQCLAYADRIRDEDLAVNAGDYLADRIADGDNVMLEGAQGTSLDIDHGNFPYVTSSNPTAGYAATGSGLGPTTVGQGEIVGIIKAYLSRVGSGPMPTELDGDQAEYIREEGGEYGTVTGRPRRVGWLDMPMLRHAARANGFTGIAINHLDVLAELDEVNVGHAYERDGERIHTLPATTEAWRDCDPVMKSFDGWSAFDPAVVADAGYSALPDNAQAYVEYVEAELDTPAYVLGVGPGREESVIRQNPFE</sequence>
<evidence type="ECO:0000255" key="1">
    <source>
        <dbReference type="HAMAP-Rule" id="MF_00011"/>
    </source>
</evidence>
<name>PURA_HALS3</name>
<dbReference type="EC" id="6.3.4.4" evidence="1"/>
<dbReference type="EMBL" id="AM774415">
    <property type="protein sequence ID" value="CAP13763.1"/>
    <property type="molecule type" value="Genomic_DNA"/>
</dbReference>
<dbReference type="RefSeq" id="WP_010902782.1">
    <property type="nucleotide sequence ID" value="NC_010364.1"/>
</dbReference>
<dbReference type="SMR" id="B0R4U8"/>
<dbReference type="EnsemblBacteria" id="CAP13763">
    <property type="protein sequence ID" value="CAP13763"/>
    <property type="gene ID" value="OE_2579F"/>
</dbReference>
<dbReference type="KEGG" id="hsl:OE_2579F"/>
<dbReference type="HOGENOM" id="CLU_029848_0_2_2"/>
<dbReference type="PhylomeDB" id="B0R4U8"/>
<dbReference type="UniPathway" id="UPA00075">
    <property type="reaction ID" value="UER00335"/>
</dbReference>
<dbReference type="Proteomes" id="UP000001321">
    <property type="component" value="Chromosome"/>
</dbReference>
<dbReference type="GO" id="GO:0005737">
    <property type="term" value="C:cytoplasm"/>
    <property type="evidence" value="ECO:0007669"/>
    <property type="project" value="UniProtKB-SubCell"/>
</dbReference>
<dbReference type="GO" id="GO:0004019">
    <property type="term" value="F:adenylosuccinate synthase activity"/>
    <property type="evidence" value="ECO:0007669"/>
    <property type="project" value="UniProtKB-UniRule"/>
</dbReference>
<dbReference type="GO" id="GO:0005525">
    <property type="term" value="F:GTP binding"/>
    <property type="evidence" value="ECO:0007669"/>
    <property type="project" value="UniProtKB-UniRule"/>
</dbReference>
<dbReference type="GO" id="GO:0000287">
    <property type="term" value="F:magnesium ion binding"/>
    <property type="evidence" value="ECO:0007669"/>
    <property type="project" value="UniProtKB-UniRule"/>
</dbReference>
<dbReference type="GO" id="GO:0044208">
    <property type="term" value="P:'de novo' AMP biosynthetic process"/>
    <property type="evidence" value="ECO:0007669"/>
    <property type="project" value="UniProtKB-UniRule"/>
</dbReference>
<dbReference type="GO" id="GO:0046040">
    <property type="term" value="P:IMP metabolic process"/>
    <property type="evidence" value="ECO:0007669"/>
    <property type="project" value="TreeGrafter"/>
</dbReference>
<dbReference type="CDD" id="cd03108">
    <property type="entry name" value="AdSS"/>
    <property type="match status" value="1"/>
</dbReference>
<dbReference type="FunFam" id="1.10.300.10:FF:000001">
    <property type="entry name" value="Adenylosuccinate synthetase"/>
    <property type="match status" value="1"/>
</dbReference>
<dbReference type="FunFam" id="3.90.170.10:FF:000001">
    <property type="entry name" value="Adenylosuccinate synthetase"/>
    <property type="match status" value="1"/>
</dbReference>
<dbReference type="Gene3D" id="3.40.440.10">
    <property type="entry name" value="Adenylosuccinate Synthetase, subunit A, domain 1"/>
    <property type="match status" value="1"/>
</dbReference>
<dbReference type="Gene3D" id="1.10.300.10">
    <property type="entry name" value="Adenylosuccinate Synthetase, subunit A, domain 2"/>
    <property type="match status" value="1"/>
</dbReference>
<dbReference type="Gene3D" id="3.90.170.10">
    <property type="entry name" value="Adenylosuccinate Synthetase, subunit A, domain 3"/>
    <property type="match status" value="1"/>
</dbReference>
<dbReference type="HAMAP" id="MF_00011">
    <property type="entry name" value="Adenylosucc_synth"/>
    <property type="match status" value="1"/>
</dbReference>
<dbReference type="InterPro" id="IPR018220">
    <property type="entry name" value="Adenylosuccin_syn_GTP-bd"/>
</dbReference>
<dbReference type="InterPro" id="IPR033128">
    <property type="entry name" value="Adenylosuccin_syn_Lys_AS"/>
</dbReference>
<dbReference type="InterPro" id="IPR042109">
    <property type="entry name" value="Adenylosuccinate_synth_dom1"/>
</dbReference>
<dbReference type="InterPro" id="IPR042110">
    <property type="entry name" value="Adenylosuccinate_synth_dom2"/>
</dbReference>
<dbReference type="InterPro" id="IPR042111">
    <property type="entry name" value="Adenylosuccinate_synth_dom3"/>
</dbReference>
<dbReference type="InterPro" id="IPR001114">
    <property type="entry name" value="Adenylosuccinate_synthetase"/>
</dbReference>
<dbReference type="InterPro" id="IPR027417">
    <property type="entry name" value="P-loop_NTPase"/>
</dbReference>
<dbReference type="NCBIfam" id="NF002223">
    <property type="entry name" value="PRK01117.1"/>
    <property type="match status" value="1"/>
</dbReference>
<dbReference type="NCBIfam" id="NF010357">
    <property type="entry name" value="PRK13785.1"/>
    <property type="match status" value="1"/>
</dbReference>
<dbReference type="NCBIfam" id="TIGR00184">
    <property type="entry name" value="purA"/>
    <property type="match status" value="1"/>
</dbReference>
<dbReference type="PANTHER" id="PTHR11846">
    <property type="entry name" value="ADENYLOSUCCINATE SYNTHETASE"/>
    <property type="match status" value="1"/>
</dbReference>
<dbReference type="PANTHER" id="PTHR11846:SF0">
    <property type="entry name" value="ADENYLOSUCCINATE SYNTHETASE"/>
    <property type="match status" value="1"/>
</dbReference>
<dbReference type="Pfam" id="PF00709">
    <property type="entry name" value="Adenylsucc_synt"/>
    <property type="match status" value="1"/>
</dbReference>
<dbReference type="SMART" id="SM00788">
    <property type="entry name" value="Adenylsucc_synt"/>
    <property type="match status" value="1"/>
</dbReference>
<dbReference type="SUPFAM" id="SSF52540">
    <property type="entry name" value="P-loop containing nucleoside triphosphate hydrolases"/>
    <property type="match status" value="1"/>
</dbReference>
<dbReference type="PROSITE" id="PS01266">
    <property type="entry name" value="ADENYLOSUCCIN_SYN_1"/>
    <property type="match status" value="1"/>
</dbReference>
<dbReference type="PROSITE" id="PS00513">
    <property type="entry name" value="ADENYLOSUCCIN_SYN_2"/>
    <property type="match status" value="1"/>
</dbReference>
<gene>
    <name evidence="1" type="primary">purA</name>
    <name type="ordered locus">OE_2579F</name>
</gene>